<sequence>MRPAAGEAGAGLRWLGLAALLAALLGTPCAAAHHEDKAISVPDHGFCQPISIPLCTDIAYNQTILPNLLGHTNQEDAGLEVHQFYPLVKVQCSAELKFFLCSMYAPVCTVLEQAIPPCRSLCERARQGCEALMNKFGFQWPERLRCENFPVHGAGEICVGQNTSDAPPGPGGAGGRGATAQPTAGYLPDLLTPPQPAAGFSFSCPRQLKVPPYLGYRFLGERDCGAPCEPGRPNGLMYFKEAEVRFARLWVGVWSVLCCASTLFTVLTYLVDMRRFSYPERPIIFLSGCYFMVAVAYAAGFLLEERVVCLERFSEDGYRTVAQGTKKEGCTILFMILYFFGMASSIWWVILSLTWFLAAGMKWGHEAIEANSQYFHLAAWAVPAVKTITILAMGQVDGDVLSGVCYVGIYSVDSLRGFVLAPLFVYLFIGTSFLLAGFVSLFRIRTIMKHDGTKTEKLEKLMVRIGVFSVLYTVPATIVVACYFYEQAFRSTWEKTWLLQTCKTYAVPCPSHFAPMSPDFTVFMIKYLMTMIVGITTGFWIWSGKTLQSWRRFYHRLSTGSKGETAV</sequence>
<evidence type="ECO:0000250" key="1"/>
<evidence type="ECO:0000250" key="2">
    <source>
        <dbReference type="UniProtKB" id="O75084"/>
    </source>
</evidence>
<evidence type="ECO:0000255" key="3"/>
<evidence type="ECO:0000255" key="4">
    <source>
        <dbReference type="PROSITE-ProRule" id="PRU00090"/>
    </source>
</evidence>
<evidence type="ECO:0000305" key="5"/>
<protein>
    <recommendedName>
        <fullName>Frizzled-7</fullName>
        <shortName>Fz-7</shortName>
        <shortName>cFz-7</shortName>
    </recommendedName>
</protein>
<proteinExistence type="evidence at transcript level"/>
<accession>O57329</accession>
<accession>Q9IA04</accession>
<reference key="1">
    <citation type="journal article" date="1997" name="Cold Spring Harb. Symp. Quant. Biol.">
        <title>Expression of Wnt and Frizzled genes during chick limb bud development.</title>
        <authorList>
            <person name="Kengaku M."/>
            <person name="Twombly V."/>
            <person name="Tabin C."/>
        </authorList>
    </citation>
    <scope>NUCLEOTIDE SEQUENCE [MRNA]</scope>
    <source>
        <tissue>Limb bud</tissue>
    </source>
</reference>
<reference key="2">
    <citation type="journal article" date="2000" name="Mech. Dev.">
        <title>Characterization of avian frizzled genes in cranial placode development.</title>
        <authorList>
            <person name="Stark M.R."/>
            <person name="Biggs J.J."/>
            <person name="Schoenwolf G.C."/>
            <person name="Rao M.S."/>
        </authorList>
    </citation>
    <scope>NUCLEOTIDE SEQUENCE [MRNA]</scope>
    <source>
        <tissue>Embryo</tissue>
    </source>
</reference>
<name>FZD7_CHICK</name>
<dbReference type="EMBL" id="AF031831">
    <property type="protein sequence ID" value="AAB87969.1"/>
    <property type="molecule type" value="mRNA"/>
</dbReference>
<dbReference type="EMBL" id="AF224317">
    <property type="protein sequence ID" value="AAF61097.1"/>
    <property type="molecule type" value="mRNA"/>
</dbReference>
<dbReference type="RefSeq" id="NP_989552.1">
    <property type="nucleotide sequence ID" value="NM_204221.2"/>
</dbReference>
<dbReference type="SMR" id="O57329"/>
<dbReference type="FunCoup" id="O57329">
    <property type="interactions" value="1053"/>
</dbReference>
<dbReference type="STRING" id="9031.ENSGALP00000051203"/>
<dbReference type="GlyCosmos" id="O57329">
    <property type="glycosylation" value="2 sites, No reported glycans"/>
</dbReference>
<dbReference type="GlyGen" id="O57329">
    <property type="glycosylation" value="2 sites"/>
</dbReference>
<dbReference type="PaxDb" id="9031-ENSGALP00000030969"/>
<dbReference type="GeneID" id="374060"/>
<dbReference type="KEGG" id="gga:374060"/>
<dbReference type="CTD" id="8324"/>
<dbReference type="VEuPathDB" id="HostDB:geneid_374060"/>
<dbReference type="eggNOG" id="KOG3577">
    <property type="taxonomic scope" value="Eukaryota"/>
</dbReference>
<dbReference type="InParanoid" id="O57329"/>
<dbReference type="OrthoDB" id="10053709at2759"/>
<dbReference type="PhylomeDB" id="O57329"/>
<dbReference type="PRO" id="PR:O57329"/>
<dbReference type="Proteomes" id="UP000000539">
    <property type="component" value="Unassembled WGS sequence"/>
</dbReference>
<dbReference type="GO" id="GO:0010008">
    <property type="term" value="C:endosome membrane"/>
    <property type="evidence" value="ECO:0007669"/>
    <property type="project" value="UniProtKB-SubCell"/>
</dbReference>
<dbReference type="GO" id="GO:0005886">
    <property type="term" value="C:plasma membrane"/>
    <property type="evidence" value="ECO:0000318"/>
    <property type="project" value="GO_Central"/>
</dbReference>
<dbReference type="GO" id="GO:0004930">
    <property type="term" value="F:G protein-coupled receptor activity"/>
    <property type="evidence" value="ECO:0007669"/>
    <property type="project" value="UniProtKB-KW"/>
</dbReference>
<dbReference type="GO" id="GO:0042813">
    <property type="term" value="F:Wnt receptor activity"/>
    <property type="evidence" value="ECO:0000318"/>
    <property type="project" value="GO_Central"/>
</dbReference>
<dbReference type="GO" id="GO:0017147">
    <property type="term" value="F:Wnt-protein binding"/>
    <property type="evidence" value="ECO:0000318"/>
    <property type="project" value="GO_Central"/>
</dbReference>
<dbReference type="GO" id="GO:0060070">
    <property type="term" value="P:canonical Wnt signaling pathway"/>
    <property type="evidence" value="ECO:0000318"/>
    <property type="project" value="GO_Central"/>
</dbReference>
<dbReference type="GO" id="GO:0035567">
    <property type="term" value="P:non-canonical Wnt signaling pathway"/>
    <property type="evidence" value="ECO:0000318"/>
    <property type="project" value="GO_Central"/>
</dbReference>
<dbReference type="CDD" id="cd15246">
    <property type="entry name" value="7tmF_FZD7"/>
    <property type="match status" value="1"/>
</dbReference>
<dbReference type="CDD" id="cd07466">
    <property type="entry name" value="CRD_FZ7"/>
    <property type="match status" value="1"/>
</dbReference>
<dbReference type="FunFam" id="1.10.2000.10:FF:000003">
    <property type="entry name" value="Frizzled class receptor 2"/>
    <property type="match status" value="1"/>
</dbReference>
<dbReference type="FunFam" id="1.20.1070.10:FF:000029">
    <property type="entry name" value="Frizzled class receptor 2"/>
    <property type="match status" value="1"/>
</dbReference>
<dbReference type="Gene3D" id="1.10.2000.10">
    <property type="entry name" value="Frizzled cysteine-rich domain"/>
    <property type="match status" value="1"/>
</dbReference>
<dbReference type="Gene3D" id="1.20.1070.10">
    <property type="entry name" value="Rhodopsin 7-helix transmembrane proteins"/>
    <property type="match status" value="1"/>
</dbReference>
<dbReference type="InterPro" id="IPR042742">
    <property type="entry name" value="Frizzled-7_CRD"/>
</dbReference>
<dbReference type="InterPro" id="IPR015526">
    <property type="entry name" value="Frizzled/SFRP"/>
</dbReference>
<dbReference type="InterPro" id="IPR000539">
    <property type="entry name" value="Frizzled/Smoothened_7TM"/>
</dbReference>
<dbReference type="InterPro" id="IPR020067">
    <property type="entry name" value="Frizzled_dom"/>
</dbReference>
<dbReference type="InterPro" id="IPR036790">
    <property type="entry name" value="Frizzled_dom_sf"/>
</dbReference>
<dbReference type="InterPro" id="IPR017981">
    <property type="entry name" value="GPCR_2-like_7TM"/>
</dbReference>
<dbReference type="PANTHER" id="PTHR11309">
    <property type="entry name" value="FRIZZLED"/>
    <property type="match status" value="1"/>
</dbReference>
<dbReference type="PANTHER" id="PTHR11309:SF31">
    <property type="entry name" value="FRIZZLED-7"/>
    <property type="match status" value="1"/>
</dbReference>
<dbReference type="Pfam" id="PF01534">
    <property type="entry name" value="Frizzled"/>
    <property type="match status" value="1"/>
</dbReference>
<dbReference type="Pfam" id="PF01392">
    <property type="entry name" value="Fz"/>
    <property type="match status" value="1"/>
</dbReference>
<dbReference type="PRINTS" id="PR00489">
    <property type="entry name" value="FRIZZLED"/>
</dbReference>
<dbReference type="SMART" id="SM00063">
    <property type="entry name" value="FRI"/>
    <property type="match status" value="1"/>
</dbReference>
<dbReference type="SMART" id="SM01330">
    <property type="entry name" value="Frizzled"/>
    <property type="match status" value="1"/>
</dbReference>
<dbReference type="SUPFAM" id="SSF63501">
    <property type="entry name" value="Frizzled cysteine-rich domain"/>
    <property type="match status" value="1"/>
</dbReference>
<dbReference type="PROSITE" id="PS50038">
    <property type="entry name" value="FZ"/>
    <property type="match status" value="1"/>
</dbReference>
<dbReference type="PROSITE" id="PS50261">
    <property type="entry name" value="G_PROTEIN_RECEP_F2_4"/>
    <property type="match status" value="1"/>
</dbReference>
<keyword id="KW-1003">Cell membrane</keyword>
<keyword id="KW-0217">Developmental protein</keyword>
<keyword id="KW-1015">Disulfide bond</keyword>
<keyword id="KW-0967">Endosome</keyword>
<keyword id="KW-0297">G-protein coupled receptor</keyword>
<keyword id="KW-0325">Glycoprotein</keyword>
<keyword id="KW-0472">Membrane</keyword>
<keyword id="KW-0675">Receptor</keyword>
<keyword id="KW-1185">Reference proteome</keyword>
<keyword id="KW-0732">Signal</keyword>
<keyword id="KW-0807">Transducer</keyword>
<keyword id="KW-0812">Transmembrane</keyword>
<keyword id="KW-1133">Transmembrane helix</keyword>
<keyword id="KW-0879">Wnt signaling pathway</keyword>
<gene>
    <name type="primary">FZD7</name>
    <name type="synonym">FZ7</name>
</gene>
<organism>
    <name type="scientific">Gallus gallus</name>
    <name type="common">Chicken</name>
    <dbReference type="NCBI Taxonomy" id="9031"/>
    <lineage>
        <taxon>Eukaryota</taxon>
        <taxon>Metazoa</taxon>
        <taxon>Chordata</taxon>
        <taxon>Craniata</taxon>
        <taxon>Vertebrata</taxon>
        <taxon>Euteleostomi</taxon>
        <taxon>Archelosauria</taxon>
        <taxon>Archosauria</taxon>
        <taxon>Dinosauria</taxon>
        <taxon>Saurischia</taxon>
        <taxon>Theropoda</taxon>
        <taxon>Coelurosauria</taxon>
        <taxon>Aves</taxon>
        <taxon>Neognathae</taxon>
        <taxon>Galloanserae</taxon>
        <taxon>Galliformes</taxon>
        <taxon>Phasianidae</taxon>
        <taxon>Phasianinae</taxon>
        <taxon>Gallus</taxon>
    </lineage>
</organism>
<comment type="function">
    <text>Receptor for Wnt proteins. Most of frizzled receptors are coupled to the beta-catenin canonical signaling pathway, which leads to the activation of disheveled proteins, inhibition of GSK-3 kinase, nuclear accumulation of beta-catenin and activation of Wnt target genes. A second signaling pathway involving PKC and calcium fluxes has been seen for some family members, but it is not yet clear if it represents a distinct pathway or if it can be integrated in the canonical pathway, as PKC seems to be required for Wnt-mediated inactivation of GSK-3 kinase. Both pathways seem to involve interactions with G-proteins. May be involved in transduction and intercellular transmission of polarity information during tissue morphogenesis and/or in differentiated tissues.</text>
</comment>
<comment type="subcellular location">
    <subcellularLocation>
        <location evidence="2">Cell membrane</location>
        <topology evidence="2">Multi-pass membrane protein</topology>
    </subcellularLocation>
    <subcellularLocation>
        <location evidence="2">Endosome membrane</location>
        <topology evidence="2">Multi-pass membrane protein</topology>
    </subcellularLocation>
    <text evidence="2">Associated to the plasma membrane in the presence of FZD7 and phosphatidylinositol 4,5-bisphosphate (PIP2). Localized in recycling endosomes in other conditions.</text>
</comment>
<comment type="tissue specificity">
    <text>Expressed broadly in cranial ectoderm. Also expressed in the developing somites and in other cranial placodes, including the olfactory, lens, otic placodes (lateral half of the vesicle) and epibranchial placodes. Low level of expression in all the mesoderm derivatives in the limb buds.</text>
</comment>
<comment type="developmental stage">
    <text>First detected as stage 6 in the forming neural tube and somites, but not in trunk surface ectoderm. By stage 8, expression persists in the cranial ectoderm and is up-regulated in the presomptive olfactory placodes. By stages 11-12, expression declines in the neural tube, but not in the cranial ectoderm; in somites, expressed all along the rostral-caudal axis as well as in presegmental mesenchyme caudal to the developing somites. Lens and otic placode expression first visible at stage 12, strongest at stages 13-16. Detected uniformly in ectoderm and mesenchyme of the limb primordia at stage 17. By stage 18, decrease of ectodermal, otic, lens and olfactory placode expression; expression appears in the epibranchial placodes. By stages 22-30, highest levels in the most distal mesoderm of the autopod, in the ventricular zone of the neural tube from the forebrain to the spinal cord, in the dermomyotomes and the tail buds.</text>
</comment>
<comment type="domain">
    <text evidence="1">Lys-Thr-X-X-X-Trp motif interacts with the PDZ domain of Dvl (Disheveled) family members and is involved in the activation of the Wnt/beta-catenin signaling pathway.</text>
</comment>
<comment type="domain">
    <text evidence="1">The FZ domain is involved in binding with Wnt ligands.</text>
</comment>
<comment type="similarity">
    <text evidence="5">Belongs to the G-protein coupled receptor Fz/Smo family.</text>
</comment>
<feature type="signal peptide" evidence="3">
    <location>
        <begin position="1"/>
        <end position="31"/>
    </location>
</feature>
<feature type="chain" id="PRO_0000012998" description="Frizzled-7">
    <location>
        <begin position="32"/>
        <end position="567"/>
    </location>
</feature>
<feature type="topological domain" description="Extracellular" evidence="3">
    <location>
        <begin position="32"/>
        <end position="250"/>
    </location>
</feature>
<feature type="transmembrane region" description="Helical; Name=1" evidence="3">
    <location>
        <begin position="251"/>
        <end position="271"/>
    </location>
</feature>
<feature type="topological domain" description="Cytoplasmic" evidence="3">
    <location>
        <begin position="272"/>
        <end position="282"/>
    </location>
</feature>
<feature type="transmembrane region" description="Helical; Name=2" evidence="3">
    <location>
        <begin position="283"/>
        <end position="303"/>
    </location>
</feature>
<feature type="topological domain" description="Extracellular" evidence="3">
    <location>
        <begin position="304"/>
        <end position="330"/>
    </location>
</feature>
<feature type="transmembrane region" description="Helical; Name=3" evidence="3">
    <location>
        <begin position="331"/>
        <end position="351"/>
    </location>
</feature>
<feature type="topological domain" description="Cytoplasmic" evidence="3">
    <location>
        <begin position="352"/>
        <end position="373"/>
    </location>
</feature>
<feature type="transmembrane region" description="Helical; Name=4" evidence="3">
    <location>
        <begin position="374"/>
        <end position="394"/>
    </location>
</feature>
<feature type="topological domain" description="Extracellular" evidence="3">
    <location>
        <begin position="395"/>
        <end position="417"/>
    </location>
</feature>
<feature type="transmembrane region" description="Helical; Name=5" evidence="3">
    <location>
        <begin position="418"/>
        <end position="438"/>
    </location>
</feature>
<feature type="topological domain" description="Cytoplasmic" evidence="3">
    <location>
        <begin position="439"/>
        <end position="464"/>
    </location>
</feature>
<feature type="transmembrane region" description="Helical; Name=6" evidence="3">
    <location>
        <begin position="465"/>
        <end position="485"/>
    </location>
</feature>
<feature type="topological domain" description="Extracellular" evidence="3">
    <location>
        <begin position="486"/>
        <end position="521"/>
    </location>
</feature>
<feature type="transmembrane region" description="Helical; Name=7" evidence="3">
    <location>
        <begin position="522"/>
        <end position="542"/>
    </location>
</feature>
<feature type="topological domain" description="Cytoplasmic" evidence="3">
    <location>
        <begin position="543"/>
        <end position="567"/>
    </location>
</feature>
<feature type="domain" description="FZ" evidence="4">
    <location>
        <begin position="42"/>
        <end position="161"/>
    </location>
</feature>
<feature type="short sequence motif" description="Lys-Thr-X-X-X-Trp motif, mediates interaction with the PDZ domain of Dvl family members" evidence="1">
    <location>
        <begin position="545"/>
        <end position="550"/>
    </location>
</feature>
<feature type="short sequence motif" description="PDZ-binding">
    <location>
        <begin position="565"/>
        <end position="567"/>
    </location>
</feature>
<feature type="glycosylation site" description="N-linked (GlcNAc...) asparagine" evidence="3">
    <location>
        <position position="61"/>
    </location>
</feature>
<feature type="glycosylation site" description="N-linked (GlcNAc...) asparagine" evidence="3">
    <location>
        <position position="162"/>
    </location>
</feature>
<feature type="disulfide bond" evidence="4">
    <location>
        <begin position="47"/>
        <end position="108"/>
    </location>
</feature>
<feature type="disulfide bond" evidence="4">
    <location>
        <begin position="55"/>
        <end position="101"/>
    </location>
</feature>
<feature type="disulfide bond" evidence="4">
    <location>
        <begin position="92"/>
        <end position="129"/>
    </location>
</feature>
<feature type="disulfide bond" evidence="4">
    <location>
        <begin position="118"/>
        <end position="158"/>
    </location>
</feature>
<feature type="disulfide bond" evidence="4">
    <location>
        <begin position="122"/>
        <end position="146"/>
    </location>
</feature>
<feature type="sequence conflict" description="In Ref. 2; AAF61097." evidence="5" ref="2">
    <original>HE</original>
    <variation>QD</variation>
    <location>
        <begin position="34"/>
        <end position="35"/>
    </location>
</feature>
<feature type="sequence conflict" description="In Ref. 2; AAF61097." evidence="5" ref="2">
    <original>V</original>
    <variation>L</variation>
    <location>
        <position position="480"/>
    </location>
</feature>